<reference key="1">
    <citation type="journal article" date="1990" name="EMBO J.">
        <title>Early expression of a collagenase-like hatching enzyme gene in the sea urchin embryo.</title>
        <authorList>
            <person name="Lepage T."/>
            <person name="Gache C."/>
        </authorList>
    </citation>
    <scope>NUCLEOTIDE SEQUENCE [MRNA]</scope>
    <scope>PROTEIN SEQUENCE OF 167-191 AND 325-333</scope>
</reference>
<reference key="2">
    <citation type="journal article" date="1994" name="Eur. J. Biochem.">
        <title>Structure of the sea urchin hatching enzyme gene.</title>
        <authorList>
            <person name="Ghiglione C."/>
            <person name="Lhomond G."/>
            <person name="Lepage T."/>
            <person name="Gache C."/>
        </authorList>
    </citation>
    <scope>NUCLEOTIDE SEQUENCE [GENOMIC DNA]</scope>
</reference>
<accession>P22757</accession>
<proteinExistence type="evidence at protein level"/>
<name>HE_PARLI</name>
<sequence>MANSGLILLVMFMIHVTTVHNVPLPSTAPSIITQLSDITTSIIEEDAFGLTTPTTGLLTPVSENDSDDDGDDITTIQTTTSSSQTVISGVVVEEGVHESNVEILKAHLEKFGYTPPGSTFGEANLNYTSAILDFQEHGGINQTGILDADTAELLSTPRCGVPDVLPFVTSSITWSRNQPVTYSFGALTSDLNQNDVKDEIRRAFRVWDDVSGLSFREVPDTTSVDIRIKFGSYDHGDGISFDGRGGVLAHAFLPRNGDAHFDDSETWTEGTRSGTNLFQVAAHEFGHSLGLYHSTVRSALMYPYYQGYVPNFRLDNDDIAGIRSLYGSNSGSGTTTTTRRPTTTRATTTRRTTTTRATTTRATTTTTTSPSRPSPPRRACSGSFDAVVRDSSNRIYALTGPYFWQLDQPSPSWGLVSNRFGFGLPQNIDASFQRGVVTYFFSECYYYYQTSTQRNFPRIPVNRKWVGLPCNIDAVYRSSRGPTYFFKDSFVYKFNSNNRLQRRTRISSLFNDVPSALHDGVEAVVRADRNYIHFYRDGRYYRMTDYGRQFVNFPNGLPYSDVIESVIPQCRGRSLSYESEGCSNSSE</sequence>
<feature type="signal peptide" evidence="6">
    <location>
        <begin position="1"/>
        <end position="18"/>
    </location>
</feature>
<feature type="propeptide" id="PRO_0000028864" description="Activation peptide" evidence="5">
    <location>
        <begin position="19"/>
        <end position="166"/>
    </location>
</feature>
<feature type="chain" id="PRO_0000028865" description="Hatching enzyme">
    <location>
        <begin position="167"/>
        <end position="587"/>
    </location>
</feature>
<feature type="chain" id="PRO_0000028866" description="Hatching enzyme 18 kDa form">
    <location>
        <begin position="167"/>
        <end position="324"/>
    </location>
</feature>
<feature type="repeat" description="Hemopexin 1">
    <location>
        <begin position="381"/>
        <end position="422"/>
    </location>
</feature>
<feature type="repeat" description="Hemopexin 2">
    <location>
        <begin position="425"/>
        <end position="468"/>
    </location>
</feature>
<feature type="repeat" description="Hemopexin 3">
    <location>
        <begin position="469"/>
        <end position="513"/>
    </location>
</feature>
<feature type="repeat" description="Hemopexin 4">
    <location>
        <begin position="518"/>
        <end position="570"/>
    </location>
</feature>
<feature type="region of interest" description="Disordered" evidence="4">
    <location>
        <begin position="325"/>
        <end position="382"/>
    </location>
</feature>
<feature type="short sequence motif" description="Cysteine switch" evidence="1">
    <location>
        <begin position="157"/>
        <end position="164"/>
    </location>
</feature>
<feature type="compositionally biased region" description="Low complexity" evidence="4">
    <location>
        <begin position="334"/>
        <end position="371"/>
    </location>
</feature>
<feature type="active site" evidence="3">
    <location>
        <position position="284"/>
    </location>
</feature>
<feature type="binding site" description="in inhibited form" evidence="1">
    <location>
        <position position="159"/>
    </location>
    <ligand>
        <name>Zn(2+)</name>
        <dbReference type="ChEBI" id="CHEBI:29105"/>
        <note>catalytic</note>
    </ligand>
</feature>
<feature type="binding site" evidence="3">
    <location>
        <position position="283"/>
    </location>
    <ligand>
        <name>Zn(2+)</name>
        <dbReference type="ChEBI" id="CHEBI:29105"/>
        <note>catalytic</note>
    </ligand>
</feature>
<feature type="binding site" evidence="3">
    <location>
        <position position="287"/>
    </location>
    <ligand>
        <name>Zn(2+)</name>
        <dbReference type="ChEBI" id="CHEBI:29105"/>
        <note>catalytic</note>
    </ligand>
</feature>
<feature type="binding site" evidence="3">
    <location>
        <position position="293"/>
    </location>
    <ligand>
        <name>Zn(2+)</name>
        <dbReference type="ChEBI" id="CHEBI:29105"/>
        <note>catalytic</note>
    </ligand>
</feature>
<feature type="site" description="Cleavage; by autolysis">
    <location>
        <begin position="324"/>
        <end position="325"/>
    </location>
</feature>
<feature type="glycosylation site" description="N-linked (GlcNAc...) asparagine" evidence="2">
    <location>
        <position position="64"/>
    </location>
</feature>
<feature type="glycosylation site" description="N-linked (GlcNAc...) asparagine" evidence="2">
    <location>
        <position position="126"/>
    </location>
</feature>
<feature type="glycosylation site" description="N-linked (GlcNAc...) asparagine" evidence="2">
    <location>
        <position position="141"/>
    </location>
</feature>
<feature type="glycosylation site" description="N-linked (GlcNAc...) asparagine" evidence="2">
    <location>
        <position position="584"/>
    </location>
</feature>
<feature type="disulfide bond" evidence="1">
    <location>
        <begin position="380"/>
        <end position="582"/>
    </location>
</feature>
<feature type="sequence conflict" description="In Ref. 2; CAA46638." evidence="6" ref="2">
    <original>R</original>
    <variation>L</variation>
    <location>
        <position position="158"/>
    </location>
</feature>
<feature type="sequence conflict" description="In Ref. 2; CAA46638." evidence="6" ref="2">
    <original>V</original>
    <variation>A</variation>
    <location>
        <position position="196"/>
    </location>
</feature>
<feature type="sequence conflict" description="In Ref. 2; CAA46638." evidence="6" ref="2">
    <original>E</original>
    <variation>I</variation>
    <location>
        <position position="269"/>
    </location>
</feature>
<feature type="sequence conflict" description="In Ref. 2; CAA46638." evidence="6" ref="2">
    <original>N</original>
    <variation>S</variation>
    <location>
        <position position="316"/>
    </location>
</feature>
<feature type="sequence conflict" description="In Ref. 2; CAA46638." evidence="6" ref="2">
    <original>P</original>
    <variation>A</variation>
    <location>
        <position position="558"/>
    </location>
</feature>
<dbReference type="EC" id="3.4.24.12"/>
<dbReference type="EMBL" id="X53598">
    <property type="protein sequence ID" value="CAA37667.1"/>
    <property type="molecule type" value="mRNA"/>
</dbReference>
<dbReference type="EMBL" id="X65722">
    <property type="protein sequence ID" value="CAA46638.1"/>
    <property type="molecule type" value="Genomic_DNA"/>
</dbReference>
<dbReference type="PIR" id="S12805">
    <property type="entry name" value="S12805"/>
</dbReference>
<dbReference type="PIR" id="S41409">
    <property type="entry name" value="S41409"/>
</dbReference>
<dbReference type="SMR" id="P22757"/>
<dbReference type="MEROPS" id="M10.010"/>
<dbReference type="KEGG" id="ag:CAA37667"/>
<dbReference type="GO" id="GO:0031012">
    <property type="term" value="C:extracellular matrix"/>
    <property type="evidence" value="ECO:0007669"/>
    <property type="project" value="InterPro"/>
</dbReference>
<dbReference type="GO" id="GO:0004222">
    <property type="term" value="F:metalloendopeptidase activity"/>
    <property type="evidence" value="ECO:0007669"/>
    <property type="project" value="InterPro"/>
</dbReference>
<dbReference type="GO" id="GO:0008270">
    <property type="term" value="F:zinc ion binding"/>
    <property type="evidence" value="ECO:0007669"/>
    <property type="project" value="InterPro"/>
</dbReference>
<dbReference type="GO" id="GO:0030574">
    <property type="term" value="P:collagen catabolic process"/>
    <property type="evidence" value="ECO:0007669"/>
    <property type="project" value="TreeGrafter"/>
</dbReference>
<dbReference type="GO" id="GO:0030198">
    <property type="term" value="P:extracellular matrix organization"/>
    <property type="evidence" value="ECO:0007669"/>
    <property type="project" value="TreeGrafter"/>
</dbReference>
<dbReference type="GO" id="GO:0006508">
    <property type="term" value="P:proteolysis"/>
    <property type="evidence" value="ECO:0007669"/>
    <property type="project" value="UniProtKB-KW"/>
</dbReference>
<dbReference type="CDD" id="cd00094">
    <property type="entry name" value="HX"/>
    <property type="match status" value="1"/>
</dbReference>
<dbReference type="CDD" id="cd04278">
    <property type="entry name" value="ZnMc_MMP"/>
    <property type="match status" value="1"/>
</dbReference>
<dbReference type="Gene3D" id="3.40.390.10">
    <property type="entry name" value="Collagenase (Catalytic Domain)"/>
    <property type="match status" value="1"/>
</dbReference>
<dbReference type="Gene3D" id="2.110.10.10">
    <property type="entry name" value="Hemopexin-like domain"/>
    <property type="match status" value="2"/>
</dbReference>
<dbReference type="InterPro" id="IPR000585">
    <property type="entry name" value="Hemopexin-like_dom"/>
</dbReference>
<dbReference type="InterPro" id="IPR036375">
    <property type="entry name" value="Hemopexin-like_dom_sf"/>
</dbReference>
<dbReference type="InterPro" id="IPR018487">
    <property type="entry name" value="Hemopexin-like_repeat"/>
</dbReference>
<dbReference type="InterPro" id="IPR033739">
    <property type="entry name" value="M10A_MMP"/>
</dbReference>
<dbReference type="InterPro" id="IPR024079">
    <property type="entry name" value="MetalloPept_cat_dom_sf"/>
</dbReference>
<dbReference type="InterPro" id="IPR001818">
    <property type="entry name" value="Pept_M10_metallopeptidase"/>
</dbReference>
<dbReference type="InterPro" id="IPR021190">
    <property type="entry name" value="Pept_M10A"/>
</dbReference>
<dbReference type="InterPro" id="IPR021158">
    <property type="entry name" value="Pept_M10A_Zn_BS"/>
</dbReference>
<dbReference type="InterPro" id="IPR006026">
    <property type="entry name" value="Peptidase_Metallo"/>
</dbReference>
<dbReference type="InterPro" id="IPR002477">
    <property type="entry name" value="Peptidoglycan-bd-like"/>
</dbReference>
<dbReference type="InterPro" id="IPR036365">
    <property type="entry name" value="PGBD-like_sf"/>
</dbReference>
<dbReference type="PANTHER" id="PTHR10201">
    <property type="entry name" value="MATRIX METALLOPROTEINASE"/>
    <property type="match status" value="1"/>
</dbReference>
<dbReference type="PANTHER" id="PTHR10201:SF310">
    <property type="entry name" value="MMP-LIKE PROTEIN"/>
    <property type="match status" value="1"/>
</dbReference>
<dbReference type="Pfam" id="PF00045">
    <property type="entry name" value="Hemopexin"/>
    <property type="match status" value="3"/>
</dbReference>
<dbReference type="Pfam" id="PF00413">
    <property type="entry name" value="Peptidase_M10"/>
    <property type="match status" value="1"/>
</dbReference>
<dbReference type="Pfam" id="PF01471">
    <property type="entry name" value="PG_binding_1"/>
    <property type="match status" value="1"/>
</dbReference>
<dbReference type="PIRSF" id="PIRSF001191">
    <property type="entry name" value="Peptidase_M10A_matrix"/>
    <property type="match status" value="1"/>
</dbReference>
<dbReference type="PRINTS" id="PR00138">
    <property type="entry name" value="MATRIXIN"/>
</dbReference>
<dbReference type="SMART" id="SM00120">
    <property type="entry name" value="HX"/>
    <property type="match status" value="4"/>
</dbReference>
<dbReference type="SMART" id="SM00235">
    <property type="entry name" value="ZnMc"/>
    <property type="match status" value="1"/>
</dbReference>
<dbReference type="SUPFAM" id="SSF50923">
    <property type="entry name" value="Hemopexin-like domain"/>
    <property type="match status" value="1"/>
</dbReference>
<dbReference type="SUPFAM" id="SSF55486">
    <property type="entry name" value="Metalloproteases ('zincins'), catalytic domain"/>
    <property type="match status" value="1"/>
</dbReference>
<dbReference type="SUPFAM" id="SSF47090">
    <property type="entry name" value="PGBD-like"/>
    <property type="match status" value="1"/>
</dbReference>
<dbReference type="PROSITE" id="PS00546">
    <property type="entry name" value="CYSTEINE_SWITCH"/>
    <property type="match status" value="1"/>
</dbReference>
<dbReference type="PROSITE" id="PS51642">
    <property type="entry name" value="HEMOPEXIN_2"/>
    <property type="match status" value="4"/>
</dbReference>
<dbReference type="PROSITE" id="PS00142">
    <property type="entry name" value="ZINC_PROTEASE"/>
    <property type="match status" value="1"/>
</dbReference>
<evidence type="ECO:0000250" key="1"/>
<evidence type="ECO:0000255" key="2"/>
<evidence type="ECO:0000255" key="3">
    <source>
        <dbReference type="PROSITE-ProRule" id="PRU10095"/>
    </source>
</evidence>
<evidence type="ECO:0000256" key="4">
    <source>
        <dbReference type="SAM" id="MobiDB-lite"/>
    </source>
</evidence>
<evidence type="ECO:0000269" key="5">
    <source>
    </source>
</evidence>
<evidence type="ECO:0000305" key="6"/>
<comment type="function">
    <text>Allows the sea urchin to digest the protective envelope derived from the egg extracellular matrix; thus allowing the sea urchin to swim freely.</text>
</comment>
<comment type="catalytic activity">
    <reaction>
        <text>Hydrolysis of proteins of the fertilization envelope and dimethylcasein.</text>
        <dbReference type="EC" id="3.4.24.12"/>
    </reaction>
</comment>
<comment type="cofactor">
    <cofactor evidence="1">
        <name>Zn(2+)</name>
        <dbReference type="ChEBI" id="CHEBI:29105"/>
    </cofactor>
    <text evidence="1">Binds 1 zinc ion per subunit.</text>
</comment>
<comment type="developmental stage">
    <text>Embryo, blastula stage.</text>
</comment>
<comment type="domain">
    <text>There are two distinct domains in this protein; the catalytic N-terminal, and the C-terminal which is involved in substrate specificity.</text>
</comment>
<comment type="domain">
    <text>The conserved cysteine present in the cysteine-switch motif binds the catalytic zinc ion, thus inhibiting the enzyme. The dissociation of the cysteine from the zinc ion upon the activation-peptide release activates the enzyme.</text>
</comment>
<comment type="similarity">
    <text evidence="6">Belongs to the peptidase M10A family.</text>
</comment>
<protein>
    <recommendedName>
        <fullName>Hatching enzyme</fullName>
        <shortName>HE</shortName>
        <shortName>HEZ</shortName>
        <ecNumber>3.4.24.12</ecNumber>
    </recommendedName>
    <alternativeName>
        <fullName>Envelysin</fullName>
    </alternativeName>
    <alternativeName>
        <fullName>Sea-urchin-hatching proteinase</fullName>
    </alternativeName>
    <component>
        <recommendedName>
            <fullName>Hatching enzyme 18 kDa form</fullName>
        </recommendedName>
    </component>
</protein>
<keyword id="KW-0068">Autocatalytic cleavage</keyword>
<keyword id="KW-0106">Calcium</keyword>
<keyword id="KW-0903">Direct protein sequencing</keyword>
<keyword id="KW-1015">Disulfide bond</keyword>
<keyword id="KW-0325">Glycoprotein</keyword>
<keyword id="KW-0378">Hydrolase</keyword>
<keyword id="KW-0479">Metal-binding</keyword>
<keyword id="KW-0482">Metalloprotease</keyword>
<keyword id="KW-0645">Protease</keyword>
<keyword id="KW-0677">Repeat</keyword>
<keyword id="KW-0732">Signal</keyword>
<keyword id="KW-0862">Zinc</keyword>
<keyword id="KW-0865">Zymogen</keyword>
<organism>
    <name type="scientific">Paracentrotus lividus</name>
    <name type="common">Common sea urchin</name>
    <dbReference type="NCBI Taxonomy" id="7656"/>
    <lineage>
        <taxon>Eukaryota</taxon>
        <taxon>Metazoa</taxon>
        <taxon>Echinodermata</taxon>
        <taxon>Eleutherozoa</taxon>
        <taxon>Echinozoa</taxon>
        <taxon>Echinoidea</taxon>
        <taxon>Euechinoidea</taxon>
        <taxon>Echinacea</taxon>
        <taxon>Camarodonta</taxon>
        <taxon>Echinidea</taxon>
        <taxon>Echinidae</taxon>
        <taxon>Paracentrotus</taxon>
    </lineage>
</organism>